<reference key="1">
    <citation type="journal article" date="2001" name="Nature">
        <title>Genome sequence of Yersinia pestis, the causative agent of plague.</title>
        <authorList>
            <person name="Parkhill J."/>
            <person name="Wren B.W."/>
            <person name="Thomson N.R."/>
            <person name="Titball R.W."/>
            <person name="Holden M.T.G."/>
            <person name="Prentice M.B."/>
            <person name="Sebaihia M."/>
            <person name="James K.D."/>
            <person name="Churcher C.M."/>
            <person name="Mungall K.L."/>
            <person name="Baker S."/>
            <person name="Basham D."/>
            <person name="Bentley S.D."/>
            <person name="Brooks K."/>
            <person name="Cerdeno-Tarraga A.-M."/>
            <person name="Chillingworth T."/>
            <person name="Cronin A."/>
            <person name="Davies R.M."/>
            <person name="Davis P."/>
            <person name="Dougan G."/>
            <person name="Feltwell T."/>
            <person name="Hamlin N."/>
            <person name="Holroyd S."/>
            <person name="Jagels K."/>
            <person name="Karlyshev A.V."/>
            <person name="Leather S."/>
            <person name="Moule S."/>
            <person name="Oyston P.C.F."/>
            <person name="Quail M.A."/>
            <person name="Rutherford K.M."/>
            <person name="Simmonds M."/>
            <person name="Skelton J."/>
            <person name="Stevens K."/>
            <person name="Whitehead S."/>
            <person name="Barrell B.G."/>
        </authorList>
    </citation>
    <scope>NUCLEOTIDE SEQUENCE [LARGE SCALE GENOMIC DNA]</scope>
    <source>
        <strain>CO-92 / Biovar Orientalis</strain>
    </source>
</reference>
<reference key="2">
    <citation type="journal article" date="2002" name="J. Bacteriol.">
        <title>Genome sequence of Yersinia pestis KIM.</title>
        <authorList>
            <person name="Deng W."/>
            <person name="Burland V."/>
            <person name="Plunkett G. III"/>
            <person name="Boutin A."/>
            <person name="Mayhew G.F."/>
            <person name="Liss P."/>
            <person name="Perna N.T."/>
            <person name="Rose D.J."/>
            <person name="Mau B."/>
            <person name="Zhou S."/>
            <person name="Schwartz D.C."/>
            <person name="Fetherston J.D."/>
            <person name="Lindler L.E."/>
            <person name="Brubaker R.R."/>
            <person name="Plano G.V."/>
            <person name="Straley S.C."/>
            <person name="McDonough K.A."/>
            <person name="Nilles M.L."/>
            <person name="Matson J.S."/>
            <person name="Blattner F.R."/>
            <person name="Perry R.D."/>
        </authorList>
    </citation>
    <scope>NUCLEOTIDE SEQUENCE [LARGE SCALE GENOMIC DNA]</scope>
    <source>
        <strain>KIM10+ / Biovar Mediaevalis</strain>
    </source>
</reference>
<reference key="3">
    <citation type="journal article" date="2004" name="DNA Res.">
        <title>Complete genome sequence of Yersinia pestis strain 91001, an isolate avirulent to humans.</title>
        <authorList>
            <person name="Song Y."/>
            <person name="Tong Z."/>
            <person name="Wang J."/>
            <person name="Wang L."/>
            <person name="Guo Z."/>
            <person name="Han Y."/>
            <person name="Zhang J."/>
            <person name="Pei D."/>
            <person name="Zhou D."/>
            <person name="Qin H."/>
            <person name="Pang X."/>
            <person name="Han Y."/>
            <person name="Zhai J."/>
            <person name="Li M."/>
            <person name="Cui B."/>
            <person name="Qi Z."/>
            <person name="Jin L."/>
            <person name="Dai R."/>
            <person name="Chen F."/>
            <person name="Li S."/>
            <person name="Ye C."/>
            <person name="Du Z."/>
            <person name="Lin W."/>
            <person name="Wang J."/>
            <person name="Yu J."/>
            <person name="Yang H."/>
            <person name="Wang J."/>
            <person name="Huang P."/>
            <person name="Yang R."/>
        </authorList>
    </citation>
    <scope>NUCLEOTIDE SEQUENCE [LARGE SCALE GENOMIC DNA]</scope>
    <source>
        <strain>91001 / Biovar Mediaevalis</strain>
    </source>
</reference>
<name>LPLA_YERPE</name>
<evidence type="ECO:0000255" key="1">
    <source>
        <dbReference type="HAMAP-Rule" id="MF_01602"/>
    </source>
</evidence>
<evidence type="ECO:0000255" key="2">
    <source>
        <dbReference type="PROSITE-ProRule" id="PRU01067"/>
    </source>
</evidence>
<dbReference type="EC" id="6.3.1.20" evidence="1"/>
<dbReference type="EMBL" id="AL590842">
    <property type="protein sequence ID" value="CAL21041.1"/>
    <property type="molecule type" value="Genomic_DNA"/>
</dbReference>
<dbReference type="EMBL" id="AE009952">
    <property type="protein sequence ID" value="AAM85493.1"/>
    <property type="molecule type" value="Genomic_DNA"/>
</dbReference>
<dbReference type="EMBL" id="AE017042">
    <property type="protein sequence ID" value="AAS62406.1"/>
    <property type="molecule type" value="Genomic_DNA"/>
</dbReference>
<dbReference type="PIR" id="AF0294">
    <property type="entry name" value="AF0294"/>
</dbReference>
<dbReference type="RefSeq" id="WP_002211816.1">
    <property type="nucleotide sequence ID" value="NZ_WUCM01000025.1"/>
</dbReference>
<dbReference type="RefSeq" id="YP_002347377.1">
    <property type="nucleotide sequence ID" value="NC_003143.1"/>
</dbReference>
<dbReference type="SMR" id="Q8ZDY2"/>
<dbReference type="STRING" id="214092.YPO2414"/>
<dbReference type="PaxDb" id="214092-YPO2414"/>
<dbReference type="DNASU" id="1146873"/>
<dbReference type="EnsemblBacteria" id="AAS62406">
    <property type="protein sequence ID" value="AAS62406"/>
    <property type="gene ID" value="YP_2200"/>
</dbReference>
<dbReference type="KEGG" id="ype:YPO2414"/>
<dbReference type="KEGG" id="ypk:y1926"/>
<dbReference type="KEGG" id="ypm:YP_2200"/>
<dbReference type="PATRIC" id="fig|214092.21.peg.2821"/>
<dbReference type="eggNOG" id="COG0095">
    <property type="taxonomic scope" value="Bacteria"/>
</dbReference>
<dbReference type="HOGENOM" id="CLU_022986_0_1_6"/>
<dbReference type="OMA" id="RYQNWDW"/>
<dbReference type="OrthoDB" id="9787898at2"/>
<dbReference type="UniPathway" id="UPA00537">
    <property type="reaction ID" value="UER00594"/>
</dbReference>
<dbReference type="UniPathway" id="UPA00537">
    <property type="reaction ID" value="UER00595"/>
</dbReference>
<dbReference type="Proteomes" id="UP000000815">
    <property type="component" value="Chromosome"/>
</dbReference>
<dbReference type="Proteomes" id="UP000001019">
    <property type="component" value="Chromosome"/>
</dbReference>
<dbReference type="Proteomes" id="UP000002490">
    <property type="component" value="Chromosome"/>
</dbReference>
<dbReference type="GO" id="GO:0005737">
    <property type="term" value="C:cytoplasm"/>
    <property type="evidence" value="ECO:0000318"/>
    <property type="project" value="GO_Central"/>
</dbReference>
<dbReference type="GO" id="GO:0005829">
    <property type="term" value="C:cytosol"/>
    <property type="evidence" value="ECO:0000318"/>
    <property type="project" value="GO_Central"/>
</dbReference>
<dbReference type="GO" id="GO:0005524">
    <property type="term" value="F:ATP binding"/>
    <property type="evidence" value="ECO:0007669"/>
    <property type="project" value="UniProtKB-KW"/>
</dbReference>
<dbReference type="GO" id="GO:0016979">
    <property type="term" value="F:lipoate-protein ligase activity"/>
    <property type="evidence" value="ECO:0000318"/>
    <property type="project" value="GO_Central"/>
</dbReference>
<dbReference type="GO" id="GO:0017118">
    <property type="term" value="F:lipoyltransferase activity"/>
    <property type="evidence" value="ECO:0000318"/>
    <property type="project" value="GO_Central"/>
</dbReference>
<dbReference type="GO" id="GO:0036211">
    <property type="term" value="P:protein modification process"/>
    <property type="evidence" value="ECO:0007669"/>
    <property type="project" value="InterPro"/>
</dbReference>
<dbReference type="CDD" id="cd16443">
    <property type="entry name" value="LplA"/>
    <property type="match status" value="1"/>
</dbReference>
<dbReference type="FunFam" id="3.30.930.10:FF:000024">
    <property type="entry name" value="Lipoate-protein ligase A"/>
    <property type="match status" value="1"/>
</dbReference>
<dbReference type="Gene3D" id="3.30.930.10">
    <property type="entry name" value="Bira Bifunctional Protein, Domain 2"/>
    <property type="match status" value="1"/>
</dbReference>
<dbReference type="Gene3D" id="3.30.390.50">
    <property type="entry name" value="CO dehydrogenase flavoprotein, C-terminal domain"/>
    <property type="match status" value="1"/>
</dbReference>
<dbReference type="HAMAP" id="MF_01602">
    <property type="entry name" value="LplA"/>
    <property type="match status" value="1"/>
</dbReference>
<dbReference type="InterPro" id="IPR045864">
    <property type="entry name" value="aa-tRNA-synth_II/BPL/LPL"/>
</dbReference>
<dbReference type="InterPro" id="IPR004143">
    <property type="entry name" value="BPL_LPL_catalytic"/>
</dbReference>
<dbReference type="InterPro" id="IPR023741">
    <property type="entry name" value="Lipoate_ligase_A"/>
</dbReference>
<dbReference type="InterPro" id="IPR019491">
    <property type="entry name" value="Lipoate_protein_ligase_C"/>
</dbReference>
<dbReference type="InterPro" id="IPR004562">
    <property type="entry name" value="LipoylTrfase_LipoateP_Ligase"/>
</dbReference>
<dbReference type="NCBIfam" id="TIGR00545">
    <property type="entry name" value="lipoyltrans"/>
    <property type="match status" value="1"/>
</dbReference>
<dbReference type="PANTHER" id="PTHR12561">
    <property type="entry name" value="LIPOATE-PROTEIN LIGASE"/>
    <property type="match status" value="1"/>
</dbReference>
<dbReference type="PANTHER" id="PTHR12561:SF3">
    <property type="entry name" value="LIPOYLTRANSFERASE 1, MITOCHONDRIAL"/>
    <property type="match status" value="1"/>
</dbReference>
<dbReference type="Pfam" id="PF10437">
    <property type="entry name" value="Lip_prot_lig_C"/>
    <property type="match status" value="1"/>
</dbReference>
<dbReference type="Pfam" id="PF21948">
    <property type="entry name" value="LplA-B_cat"/>
    <property type="match status" value="1"/>
</dbReference>
<dbReference type="SUPFAM" id="SSF55681">
    <property type="entry name" value="Class II aaRS and biotin synthetases"/>
    <property type="match status" value="1"/>
</dbReference>
<dbReference type="SUPFAM" id="SSF82649">
    <property type="entry name" value="SufE/NifU"/>
    <property type="match status" value="1"/>
</dbReference>
<dbReference type="PROSITE" id="PS51733">
    <property type="entry name" value="BPL_LPL_CATALYTIC"/>
    <property type="match status" value="1"/>
</dbReference>
<feature type="chain" id="PRO_0000209573" description="Lipoate-protein ligase A">
    <location>
        <begin position="1"/>
        <end position="338"/>
    </location>
</feature>
<feature type="domain" description="BPL/LPL catalytic" evidence="2">
    <location>
        <begin position="29"/>
        <end position="216"/>
    </location>
</feature>
<feature type="binding site" evidence="1">
    <location>
        <position position="71"/>
    </location>
    <ligand>
        <name>ATP</name>
        <dbReference type="ChEBI" id="CHEBI:30616"/>
    </ligand>
</feature>
<feature type="binding site" evidence="1">
    <location>
        <begin position="76"/>
        <end position="79"/>
    </location>
    <ligand>
        <name>ATP</name>
        <dbReference type="ChEBI" id="CHEBI:30616"/>
    </ligand>
</feature>
<feature type="binding site" evidence="1">
    <location>
        <position position="134"/>
    </location>
    <ligand>
        <name>(R)-lipoate</name>
        <dbReference type="ChEBI" id="CHEBI:83088"/>
    </ligand>
</feature>
<feature type="binding site" evidence="1">
    <location>
        <position position="134"/>
    </location>
    <ligand>
        <name>ATP</name>
        <dbReference type="ChEBI" id="CHEBI:30616"/>
    </ligand>
</feature>
<organism>
    <name type="scientific">Yersinia pestis</name>
    <dbReference type="NCBI Taxonomy" id="632"/>
    <lineage>
        <taxon>Bacteria</taxon>
        <taxon>Pseudomonadati</taxon>
        <taxon>Pseudomonadota</taxon>
        <taxon>Gammaproteobacteria</taxon>
        <taxon>Enterobacterales</taxon>
        <taxon>Yersiniaceae</taxon>
        <taxon>Yersinia</taxon>
    </lineage>
</organism>
<accession>Q8ZDY2</accession>
<accession>Q0WEB1</accession>
<protein>
    <recommendedName>
        <fullName evidence="1">Lipoate-protein ligase A</fullName>
        <ecNumber evidence="1">6.3.1.20</ecNumber>
    </recommendedName>
    <alternativeName>
        <fullName evidence="1">Lipoate--protein ligase</fullName>
    </alternativeName>
</protein>
<gene>
    <name evidence="1" type="primary">lplA</name>
    <name type="ordered locus">YPO2414</name>
    <name type="ordered locus">y1926</name>
    <name type="ordered locus">YP_2200</name>
</gene>
<proteinExistence type="inferred from homology"/>
<keyword id="KW-0067">ATP-binding</keyword>
<keyword id="KW-0963">Cytoplasm</keyword>
<keyword id="KW-0436">Ligase</keyword>
<keyword id="KW-0547">Nucleotide-binding</keyword>
<keyword id="KW-1185">Reference proteome</keyword>
<sequence length="338" mass="37994">MSSLRLLISDSYDPWFNLAVEECIFRQMSPNQRVLFLWRNADTVVIGRAQNPWKECNTRRMEQDGVKLARRSSGGGAVFHDLGNTCFTFMAGKPGYDKTISTQIILNALASLGIQATASGRNDLVVINGEDERKVSGSAYKETKDRGFHHGTLLLNADLSRLADYLNPDPKKLQAKGITSVRSRVTNLVELLPGIDHGKIRTAIEQAFFAYYDEQVSAEVISPQSLPNLPGFTEQFAKQSSWEWNFGQAPAFSHVVDTRFIWGGIELHFDVLHGAIDRCQIFTDSLNPTPLEALAQRLQGAAYRPDAIDKICQHWIDDFPELQTELQQACHWLVEVLR</sequence>
<comment type="function">
    <text evidence="1">Catalyzes both the ATP-dependent activation of exogenously supplied lipoate to lipoyl-AMP and the transfer of the activated lipoyl onto the lipoyl domains of lipoate-dependent enzymes.</text>
</comment>
<comment type="catalytic activity">
    <reaction evidence="1">
        <text>L-lysyl-[lipoyl-carrier protein] + (R)-lipoate + ATP = N(6)-[(R)-lipoyl]-L-lysyl-[lipoyl-carrier protein] + AMP + diphosphate + H(+)</text>
        <dbReference type="Rhea" id="RHEA:49288"/>
        <dbReference type="Rhea" id="RHEA-COMP:10500"/>
        <dbReference type="Rhea" id="RHEA-COMP:10502"/>
        <dbReference type="ChEBI" id="CHEBI:15378"/>
        <dbReference type="ChEBI" id="CHEBI:29969"/>
        <dbReference type="ChEBI" id="CHEBI:30616"/>
        <dbReference type="ChEBI" id="CHEBI:33019"/>
        <dbReference type="ChEBI" id="CHEBI:83088"/>
        <dbReference type="ChEBI" id="CHEBI:83099"/>
        <dbReference type="ChEBI" id="CHEBI:456215"/>
        <dbReference type="EC" id="6.3.1.20"/>
    </reaction>
</comment>
<comment type="pathway">
    <text evidence="1">Protein modification; protein lipoylation via exogenous pathway; protein N(6)-(lipoyl)lysine from lipoate: step 1/2.</text>
</comment>
<comment type="pathway">
    <text evidence="1">Protein modification; protein lipoylation via exogenous pathway; protein N(6)-(lipoyl)lysine from lipoate: step 2/2.</text>
</comment>
<comment type="subunit">
    <text evidence="1">Monomer.</text>
</comment>
<comment type="subcellular location">
    <subcellularLocation>
        <location evidence="1">Cytoplasm</location>
    </subcellularLocation>
</comment>
<comment type="miscellaneous">
    <text evidence="1">In the transfer reaction, the free carboxyl group of lipoic acid is attached via an amide linkage to the epsilon-amino group of a specific lysine residue of lipoyl domains of lipoate-dependent enzymes.</text>
</comment>
<comment type="similarity">
    <text evidence="1">Belongs to the LplA family.</text>
</comment>